<accession>A9QZ74</accession>
<proteinExistence type="inferred from homology"/>
<keyword id="KW-0997">Cell inner membrane</keyword>
<keyword id="KW-1003">Cell membrane</keyword>
<keyword id="KW-0472">Membrane</keyword>
<keyword id="KW-0812">Transmembrane</keyword>
<keyword id="KW-1133">Transmembrane helix</keyword>
<organism>
    <name type="scientific">Yersinia pestis bv. Antiqua (strain Angola)</name>
    <dbReference type="NCBI Taxonomy" id="349746"/>
    <lineage>
        <taxon>Bacteria</taxon>
        <taxon>Pseudomonadati</taxon>
        <taxon>Pseudomonadota</taxon>
        <taxon>Gammaproteobacteria</taxon>
        <taxon>Enterobacterales</taxon>
        <taxon>Yersiniaceae</taxon>
        <taxon>Yersinia</taxon>
    </lineage>
</organism>
<name>Y2532_YERPG</name>
<sequence length="353" mass="39264">MSEPLKPRIDFEQPLQSLDEPVLKSAQAFDEQAAEKFYPAAPELDAEDEEGRVEGLVNAALKPKRSLWRKMVTAGMVILGASVIAQSVQWVNQAWQQQDWIALGATTAGGLIILAGVGSVVTEWRRLYHLRQRAEERDIARALLVSHGVGQGRVFCEKLARQAGLDQGHPALQRWQASLHETHNDREVVELYAKLVQPALDNQARAEISRYAAESALMIAVSPLALVDMAFIAWRNIRLINRIAALYGIELGYFSRIRLFRLVLLNIAFAGASELVREVGMDWLSQDLAARLSARAAQGIGAGLLTARLGIKAMELCRPLPWLEGDKPKLGDFRRQLMNQLKNTLPKKDKTAH</sequence>
<feature type="chain" id="PRO_1000136903" description="UPF0283 membrane protein YpAngola_A2532">
    <location>
        <begin position="1"/>
        <end position="353"/>
    </location>
</feature>
<feature type="transmembrane region" description="Helical" evidence="1">
    <location>
        <begin position="71"/>
        <end position="91"/>
    </location>
</feature>
<feature type="transmembrane region" description="Helical" evidence="1">
    <location>
        <begin position="101"/>
        <end position="121"/>
    </location>
</feature>
<feature type="transmembrane region" description="Helical" evidence="1">
    <location>
        <begin position="214"/>
        <end position="234"/>
    </location>
</feature>
<reference key="1">
    <citation type="journal article" date="2010" name="J. Bacteriol.">
        <title>Genome sequence of the deep-rooted Yersinia pestis strain Angola reveals new insights into the evolution and pangenome of the plague bacterium.</title>
        <authorList>
            <person name="Eppinger M."/>
            <person name="Worsham P.L."/>
            <person name="Nikolich M.P."/>
            <person name="Riley D.R."/>
            <person name="Sebastian Y."/>
            <person name="Mou S."/>
            <person name="Achtman M."/>
            <person name="Lindler L.E."/>
            <person name="Ravel J."/>
        </authorList>
    </citation>
    <scope>NUCLEOTIDE SEQUENCE [LARGE SCALE GENOMIC DNA]</scope>
    <source>
        <strain>Angola</strain>
    </source>
</reference>
<protein>
    <recommendedName>
        <fullName evidence="1">UPF0283 membrane protein YpAngola_A2532</fullName>
    </recommendedName>
</protein>
<comment type="subcellular location">
    <subcellularLocation>
        <location evidence="1">Cell inner membrane</location>
        <topology evidence="1">Multi-pass membrane protein</topology>
    </subcellularLocation>
</comment>
<comment type="similarity">
    <text evidence="1">Belongs to the UPF0283 family.</text>
</comment>
<gene>
    <name type="ordered locus">YpAngola_A2532</name>
</gene>
<evidence type="ECO:0000255" key="1">
    <source>
        <dbReference type="HAMAP-Rule" id="MF_01085"/>
    </source>
</evidence>
<dbReference type="EMBL" id="CP000901">
    <property type="protein sequence ID" value="ABX87143.1"/>
    <property type="molecule type" value="Genomic_DNA"/>
</dbReference>
<dbReference type="RefSeq" id="WP_002210980.1">
    <property type="nucleotide sequence ID" value="NZ_CP009935.1"/>
</dbReference>
<dbReference type="KEGG" id="ypg:YpAngola_A2532"/>
<dbReference type="PATRIC" id="fig|349746.12.peg.3554"/>
<dbReference type="GO" id="GO:0005886">
    <property type="term" value="C:plasma membrane"/>
    <property type="evidence" value="ECO:0007669"/>
    <property type="project" value="UniProtKB-SubCell"/>
</dbReference>
<dbReference type="HAMAP" id="MF_01085">
    <property type="entry name" value="UPF0283"/>
    <property type="match status" value="1"/>
</dbReference>
<dbReference type="InterPro" id="IPR021147">
    <property type="entry name" value="DUF697"/>
</dbReference>
<dbReference type="InterPro" id="IPR006507">
    <property type="entry name" value="UPF0283"/>
</dbReference>
<dbReference type="NCBIfam" id="TIGR01620">
    <property type="entry name" value="hyp_HI0043"/>
    <property type="match status" value="1"/>
</dbReference>
<dbReference type="PANTHER" id="PTHR39342">
    <property type="entry name" value="UPF0283 MEMBRANE PROTEIN YCJF"/>
    <property type="match status" value="1"/>
</dbReference>
<dbReference type="PANTHER" id="PTHR39342:SF1">
    <property type="entry name" value="UPF0283 MEMBRANE PROTEIN YCJF"/>
    <property type="match status" value="1"/>
</dbReference>
<dbReference type="Pfam" id="PF05128">
    <property type="entry name" value="DUF697"/>
    <property type="match status" value="1"/>
</dbReference>